<keyword id="KW-1003">Cell membrane</keyword>
<keyword id="KW-1015">Disulfide bond</keyword>
<keyword id="KW-0325">Glycoprotein</keyword>
<keyword id="KW-0336">GPI-anchor</keyword>
<keyword id="KW-0449">Lipoprotein</keyword>
<keyword id="KW-0472">Membrane</keyword>
<keyword id="KW-1185">Reference proteome</keyword>
<keyword id="KW-0732">Signal</keyword>
<gene>
    <name evidence="6" type="primary">LTPG21</name>
    <name evidence="8" type="ordered locus">At1g05450</name>
    <name evidence="9" type="ORF">T25N20.10</name>
</gene>
<proteinExistence type="evidence at transcript level"/>
<name>LTG21_ARATH</name>
<organism>
    <name type="scientific">Arabidopsis thaliana</name>
    <name type="common">Mouse-ear cress</name>
    <dbReference type="NCBI Taxonomy" id="3702"/>
    <lineage>
        <taxon>Eukaryota</taxon>
        <taxon>Viridiplantae</taxon>
        <taxon>Streptophyta</taxon>
        <taxon>Embryophyta</taxon>
        <taxon>Tracheophyta</taxon>
        <taxon>Spermatophyta</taxon>
        <taxon>Magnoliopsida</taxon>
        <taxon>eudicotyledons</taxon>
        <taxon>Gunneridae</taxon>
        <taxon>Pentapetalae</taxon>
        <taxon>rosids</taxon>
        <taxon>malvids</taxon>
        <taxon>Brassicales</taxon>
        <taxon>Brassicaceae</taxon>
        <taxon>Camelineae</taxon>
        <taxon>Arabidopsis</taxon>
    </lineage>
</organism>
<evidence type="ECO:0000250" key="1">
    <source>
        <dbReference type="UniProtKB" id="A0A0B4JDK1"/>
    </source>
</evidence>
<evidence type="ECO:0000250" key="2">
    <source>
        <dbReference type="UniProtKB" id="Q9C7F7"/>
    </source>
</evidence>
<evidence type="ECO:0000255" key="3"/>
<evidence type="ECO:0000255" key="4">
    <source>
        <dbReference type="PROSITE-ProRule" id="PRU00498"/>
    </source>
</evidence>
<evidence type="ECO:0000256" key="5">
    <source>
        <dbReference type="SAM" id="MobiDB-lite"/>
    </source>
</evidence>
<evidence type="ECO:0000303" key="6">
    <source>
    </source>
</evidence>
<evidence type="ECO:0000305" key="7"/>
<evidence type="ECO:0000312" key="8">
    <source>
        <dbReference type="Araport" id="AT1G05450"/>
    </source>
</evidence>
<evidence type="ECO:0000312" key="9">
    <source>
        <dbReference type="EMBL" id="AAF79724.1"/>
    </source>
</evidence>
<dbReference type="EMBL" id="AC005106">
    <property type="protein sequence ID" value="AAF79724.1"/>
    <property type="status" value="ALT_SEQ"/>
    <property type="molecule type" value="Genomic_DNA"/>
</dbReference>
<dbReference type="EMBL" id="CP002684">
    <property type="protein sequence ID" value="AEE27841.1"/>
    <property type="molecule type" value="Genomic_DNA"/>
</dbReference>
<dbReference type="EMBL" id="DQ492243">
    <property type="protein sequence ID" value="ABF59172.1"/>
    <property type="molecule type" value="mRNA"/>
</dbReference>
<dbReference type="EMBL" id="DQ653396">
    <property type="protein sequence ID" value="ABK28778.1"/>
    <property type="status" value="ALT_SEQ"/>
    <property type="molecule type" value="mRNA"/>
</dbReference>
<dbReference type="RefSeq" id="NP_973763.1">
    <property type="nucleotide sequence ID" value="NM_202034.3"/>
</dbReference>
<dbReference type="STRING" id="3702.Q1G2Y5"/>
<dbReference type="GlyCosmos" id="Q1G2Y5">
    <property type="glycosylation" value="1 site, No reported glycans"/>
</dbReference>
<dbReference type="GlyGen" id="Q1G2Y5">
    <property type="glycosylation" value="2 sites"/>
</dbReference>
<dbReference type="PaxDb" id="3702-AT1G05450.2"/>
<dbReference type="ProteomicsDB" id="185439"/>
<dbReference type="EnsemblPlants" id="AT1G05450.2">
    <property type="protein sequence ID" value="AT1G05450.2"/>
    <property type="gene ID" value="AT1G05450"/>
</dbReference>
<dbReference type="GeneID" id="837046"/>
<dbReference type="Gramene" id="AT1G05450.2">
    <property type="protein sequence ID" value="AT1G05450.2"/>
    <property type="gene ID" value="AT1G05450"/>
</dbReference>
<dbReference type="KEGG" id="ath:AT1G05450"/>
<dbReference type="Araport" id="AT1G05450"/>
<dbReference type="TAIR" id="AT1G05450"/>
<dbReference type="eggNOG" id="ENOG502RZXE">
    <property type="taxonomic scope" value="Eukaryota"/>
</dbReference>
<dbReference type="HOGENOM" id="CLU_085549_3_0_1"/>
<dbReference type="InParanoid" id="Q1G2Y5"/>
<dbReference type="OMA" id="ENFTHFR"/>
<dbReference type="OrthoDB" id="1914452at2759"/>
<dbReference type="PRO" id="PR:Q1G2Y5"/>
<dbReference type="Proteomes" id="UP000006548">
    <property type="component" value="Chromosome 1"/>
</dbReference>
<dbReference type="ExpressionAtlas" id="Q1G2Y5">
    <property type="expression patterns" value="baseline and differential"/>
</dbReference>
<dbReference type="GO" id="GO:0005886">
    <property type="term" value="C:plasma membrane"/>
    <property type="evidence" value="ECO:0007669"/>
    <property type="project" value="UniProtKB-SubCell"/>
</dbReference>
<dbReference type="GO" id="GO:0098552">
    <property type="term" value="C:side of membrane"/>
    <property type="evidence" value="ECO:0007669"/>
    <property type="project" value="UniProtKB-KW"/>
</dbReference>
<dbReference type="CDD" id="cd00010">
    <property type="entry name" value="AAI_LTSS"/>
    <property type="match status" value="1"/>
</dbReference>
<dbReference type="Gene3D" id="1.10.110.10">
    <property type="entry name" value="Plant lipid-transfer and hydrophobic proteins"/>
    <property type="match status" value="1"/>
</dbReference>
<dbReference type="InterPro" id="IPR036312">
    <property type="entry name" value="Bifun_inhib/LTP/seed_sf"/>
</dbReference>
<dbReference type="InterPro" id="IPR016140">
    <property type="entry name" value="Bifunc_inhib/LTP/seed_store"/>
</dbReference>
<dbReference type="InterPro" id="IPR043325">
    <property type="entry name" value="LTSS"/>
</dbReference>
<dbReference type="PANTHER" id="PTHR33044">
    <property type="entry name" value="BIFUNCTIONAL INHIBITOR/LIPID-TRANSFER PROTEIN/SEED STORAGE 2S ALBUMIN SUPERFAMILY PROTEIN-RELATED"/>
    <property type="match status" value="1"/>
</dbReference>
<dbReference type="Pfam" id="PF14368">
    <property type="entry name" value="LTP_2"/>
    <property type="match status" value="1"/>
</dbReference>
<dbReference type="SMART" id="SM00499">
    <property type="entry name" value="AAI"/>
    <property type="match status" value="1"/>
</dbReference>
<dbReference type="SUPFAM" id="SSF47699">
    <property type="entry name" value="Bifunctional inhibitor/lipid-transfer protein/seed storage 2S albumin"/>
    <property type="match status" value="1"/>
</dbReference>
<reference key="1">
    <citation type="journal article" date="2000" name="Nature">
        <title>Sequence and analysis of chromosome 1 of the plant Arabidopsis thaliana.</title>
        <authorList>
            <person name="Theologis A."/>
            <person name="Ecker J.R."/>
            <person name="Palm C.J."/>
            <person name="Federspiel N.A."/>
            <person name="Kaul S."/>
            <person name="White O."/>
            <person name="Alonso J."/>
            <person name="Altafi H."/>
            <person name="Araujo R."/>
            <person name="Bowman C.L."/>
            <person name="Brooks S.Y."/>
            <person name="Buehler E."/>
            <person name="Chan A."/>
            <person name="Chao Q."/>
            <person name="Chen H."/>
            <person name="Cheuk R.F."/>
            <person name="Chin C.W."/>
            <person name="Chung M.K."/>
            <person name="Conn L."/>
            <person name="Conway A.B."/>
            <person name="Conway A.R."/>
            <person name="Creasy T.H."/>
            <person name="Dewar K."/>
            <person name="Dunn P."/>
            <person name="Etgu P."/>
            <person name="Feldblyum T.V."/>
            <person name="Feng J.-D."/>
            <person name="Fong B."/>
            <person name="Fujii C.Y."/>
            <person name="Gill J.E."/>
            <person name="Goldsmith A.D."/>
            <person name="Haas B."/>
            <person name="Hansen N.F."/>
            <person name="Hughes B."/>
            <person name="Huizar L."/>
            <person name="Hunter J.L."/>
            <person name="Jenkins J."/>
            <person name="Johnson-Hopson C."/>
            <person name="Khan S."/>
            <person name="Khaykin E."/>
            <person name="Kim C.J."/>
            <person name="Koo H.L."/>
            <person name="Kremenetskaia I."/>
            <person name="Kurtz D.B."/>
            <person name="Kwan A."/>
            <person name="Lam B."/>
            <person name="Langin-Hooper S."/>
            <person name="Lee A."/>
            <person name="Lee J.M."/>
            <person name="Lenz C.A."/>
            <person name="Li J.H."/>
            <person name="Li Y.-P."/>
            <person name="Lin X."/>
            <person name="Liu S.X."/>
            <person name="Liu Z.A."/>
            <person name="Luros J.S."/>
            <person name="Maiti R."/>
            <person name="Marziali A."/>
            <person name="Militscher J."/>
            <person name="Miranda M."/>
            <person name="Nguyen M."/>
            <person name="Nierman W.C."/>
            <person name="Osborne B.I."/>
            <person name="Pai G."/>
            <person name="Peterson J."/>
            <person name="Pham P.K."/>
            <person name="Rizzo M."/>
            <person name="Rooney T."/>
            <person name="Rowley D."/>
            <person name="Sakano H."/>
            <person name="Salzberg S.L."/>
            <person name="Schwartz J.R."/>
            <person name="Shinn P."/>
            <person name="Southwick A.M."/>
            <person name="Sun H."/>
            <person name="Tallon L.J."/>
            <person name="Tambunga G."/>
            <person name="Toriumi M.J."/>
            <person name="Town C.D."/>
            <person name="Utterback T."/>
            <person name="Van Aken S."/>
            <person name="Vaysberg M."/>
            <person name="Vysotskaia V.S."/>
            <person name="Walker M."/>
            <person name="Wu D."/>
            <person name="Yu G."/>
            <person name="Fraser C.M."/>
            <person name="Venter J.C."/>
            <person name="Davis R.W."/>
        </authorList>
    </citation>
    <scope>NUCLEOTIDE SEQUENCE [LARGE SCALE GENOMIC DNA]</scope>
    <source>
        <strain>cv. Columbia</strain>
    </source>
</reference>
<reference key="2">
    <citation type="journal article" date="2017" name="Plant J.">
        <title>Araport11: a complete reannotation of the Arabidopsis thaliana reference genome.</title>
        <authorList>
            <person name="Cheng C.Y."/>
            <person name="Krishnakumar V."/>
            <person name="Chan A.P."/>
            <person name="Thibaud-Nissen F."/>
            <person name="Schobel S."/>
            <person name="Town C.D."/>
        </authorList>
    </citation>
    <scope>GENOME REANNOTATION</scope>
    <source>
        <strain>cv. Columbia</strain>
    </source>
</reference>
<reference key="3">
    <citation type="journal article" date="2006" name="Plant Biotechnol. J.">
        <title>Simultaneous high-throughput recombinational cloning of open reading frames in closed and open configurations.</title>
        <authorList>
            <person name="Underwood B.A."/>
            <person name="Vanderhaeghen R."/>
            <person name="Whitford R."/>
            <person name="Town C.D."/>
            <person name="Hilson P."/>
        </authorList>
    </citation>
    <scope>NUCLEOTIDE SEQUENCE [LARGE SCALE MRNA]</scope>
    <source>
        <strain>cv. Columbia</strain>
    </source>
</reference>
<reference key="4">
    <citation type="journal article" date="2013" name="Plant Mol. Biol.">
        <title>Coexpression patterns indicate that GPI-anchored non-specific lipid transfer proteins are involved in accumulation of cuticular wax, suberin and sporopollenin.</title>
        <authorList>
            <person name="Edstam M.M."/>
            <person name="Blomqvist K."/>
            <person name="Ekloef A."/>
            <person name="Wennergren U."/>
            <person name="Edqvist J."/>
        </authorList>
    </citation>
    <scope>GENE FAMILY</scope>
    <scope>NOMENCLATURE</scope>
    <source>
        <strain>cv. Columbia</strain>
    </source>
</reference>
<protein>
    <recommendedName>
        <fullName evidence="6">Non-specific lipid transfer protein GPI-anchored 21</fullName>
        <shortName evidence="6">AtLTPG-21</shortName>
        <shortName evidence="6">Protein LTP-GPI-ANCHORED 21</shortName>
    </recommendedName>
</protein>
<accession>Q1G2Y5</accession>
<accession>A0MFR9</accession>
<accession>Q9LR49</accession>
<sequence>MNSNSFLISAALIFSLLSSNSPTSILAQINTPCSPSMLSSVTGCTSFLTGGGSFPTSDCCGALKSLTGTGMDCLCLIVTAGVPISIPINRTLAISLPRACGIPGVPVQCKASAAPLPTPGPASFGPTTSPTDSQTSDPEGSASFRPPTSPTTSQTPNDKDLSGSGNGGDPMGFAPPPPSSSPSSSHSLKLSYLLFAFAFTIIKFI</sequence>
<feature type="signal peptide" evidence="3">
    <location>
        <begin position="1"/>
        <end position="27"/>
    </location>
</feature>
<feature type="chain" id="PRO_5014308292" description="Non-specific lipid transfer protein GPI-anchored 21">
    <location>
        <begin position="28"/>
        <end position="179"/>
    </location>
</feature>
<feature type="propeptide" id="PRO_0000451652" description="Removed in mature form" evidence="3">
    <location>
        <begin position="180"/>
        <end position="205"/>
    </location>
</feature>
<feature type="region of interest" description="Disordered" evidence="5">
    <location>
        <begin position="116"/>
        <end position="182"/>
    </location>
</feature>
<feature type="compositionally biased region" description="Low complexity" evidence="5">
    <location>
        <begin position="126"/>
        <end position="156"/>
    </location>
</feature>
<feature type="lipid moiety-binding region" description="GPI-anchor amidated serine" evidence="3">
    <location>
        <position position="179"/>
    </location>
</feature>
<feature type="glycosylation site" description="N-linked (GlcNAc...) asparagine" evidence="4">
    <location>
        <position position="89"/>
    </location>
</feature>
<feature type="disulfide bond" evidence="1">
    <location>
        <begin position="33"/>
        <end position="75"/>
    </location>
</feature>
<feature type="disulfide bond" evidence="1">
    <location>
        <begin position="44"/>
        <end position="59"/>
    </location>
</feature>
<feature type="disulfide bond" evidence="1">
    <location>
        <begin position="60"/>
        <end position="100"/>
    </location>
</feature>
<feature type="disulfide bond" evidence="1">
    <location>
        <begin position="73"/>
        <end position="109"/>
    </location>
</feature>
<comment type="function">
    <text evidence="2">Probable lipid transfer protein.</text>
</comment>
<comment type="subcellular location">
    <subcellularLocation>
        <location evidence="3">Cell membrane</location>
        <topology evidence="3">Lipid-anchor</topology>
        <topology evidence="3">GPI-anchor</topology>
    </subcellularLocation>
</comment>
<comment type="similarity">
    <text evidence="7">Belongs to the plant LTP family.</text>
</comment>
<comment type="sequence caution" evidence="7">
    <conflict type="erroneous gene model prediction">
        <sequence resource="EMBL-CDS" id="AAF79724"/>
    </conflict>
</comment>
<comment type="sequence caution" evidence="7">
    <conflict type="erroneous termination">
        <sequence resource="EMBL-CDS" id="ABK28778"/>
    </conflict>
    <text>Extended C-terminus.</text>
</comment>